<evidence type="ECO:0000250" key="1">
    <source>
        <dbReference type="UniProtKB" id="P0CX82"/>
    </source>
</evidence>
<evidence type="ECO:0000256" key="2">
    <source>
        <dbReference type="SAM" id="MobiDB-lite"/>
    </source>
</evidence>
<evidence type="ECO:0000269" key="3">
    <source>
    </source>
</evidence>
<evidence type="ECO:0000303" key="4">
    <source>
    </source>
</evidence>
<evidence type="ECO:0000305" key="5"/>
<evidence type="ECO:0000305" key="6">
    <source>
    </source>
</evidence>
<evidence type="ECO:0007744" key="7">
    <source>
        <dbReference type="PDB" id="7PZY"/>
    </source>
</evidence>
<evidence type="ECO:0007744" key="8">
    <source>
        <dbReference type="PDB" id="7Q0F"/>
    </source>
</evidence>
<evidence type="ECO:0007744" key="9">
    <source>
        <dbReference type="PDB" id="7Q0P"/>
    </source>
</evidence>
<protein>
    <recommendedName>
        <fullName evidence="4">Large ribosomal subunit protein eL19</fullName>
    </recommendedName>
    <alternativeName>
        <fullName>60S ribosomal protein L19-A</fullName>
    </alternativeName>
</protein>
<organism>
    <name type="scientific">Candida albicans (strain SC5314 / ATCC MYA-2876)</name>
    <name type="common">Yeast</name>
    <dbReference type="NCBI Taxonomy" id="237561"/>
    <lineage>
        <taxon>Eukaryota</taxon>
        <taxon>Fungi</taxon>
        <taxon>Dikarya</taxon>
        <taxon>Ascomycota</taxon>
        <taxon>Saccharomycotina</taxon>
        <taxon>Pichiomycetes</taxon>
        <taxon>Debaryomycetaceae</taxon>
        <taxon>Candida/Lodderomyces clade</taxon>
        <taxon>Candida</taxon>
    </lineage>
</organism>
<keyword id="KW-0002">3D-structure</keyword>
<keyword id="KW-0963">Cytoplasm</keyword>
<keyword id="KW-1185">Reference proteome</keyword>
<keyword id="KW-0687">Ribonucleoprotein</keyword>
<keyword id="KW-0689">Ribosomal protein</keyword>
<feature type="chain" id="PRO_0000456516" description="Large ribosomal subunit protein eL19">
    <location>
        <begin position="1"/>
        <end position="190"/>
    </location>
</feature>
<feature type="region of interest" description="Disordered" evidence="2">
    <location>
        <begin position="56"/>
        <end position="85"/>
    </location>
</feature>
<feature type="region of interest" description="Disordered" evidence="2">
    <location>
        <begin position="166"/>
        <end position="190"/>
    </location>
</feature>
<feature type="compositionally biased region" description="Basic residues" evidence="2">
    <location>
        <begin position="72"/>
        <end position="83"/>
    </location>
</feature>
<feature type="compositionally biased region" description="Basic and acidic residues" evidence="2">
    <location>
        <begin position="166"/>
        <end position="184"/>
    </location>
</feature>
<comment type="function">
    <text evidence="1 6">Component of the ribosome, a large ribonucleoprotein complex responsible for the synthesis of proteins in the cell. The small ribosomal subunit (SSU) binds messenger RNAs (mRNAs) and translates the encoded message by selecting cognate aminoacyl-transfer RNA (tRNA) molecules. The large subunit (LSU) contains the ribosomal catalytic site termed the peptidyl transferase center (PTC), which catalyzes the formation of peptide bonds, thereby polymerizing the amino acids delivered by tRNAs into a polypeptide chain. The nascent polypeptides leave the ribosome through a tunnel in the LSU and interact with protein factors that function in enzymatic processing, targeting, and the membrane insertion of nascent chains at the exit of the ribosomal tunnel (Probable). RPL19A may play a role in the last stages of translation initiation, in particular subunit joining and shedding/releasing factors (By similarity).</text>
</comment>
<comment type="subunit">
    <text evidence="3">Component of the large ribosomal subunit (PubMed:35613268). Mature ribosomes consist of a small (40S) and a large (60S) subunit (PubMed:35613268). The 40S subunit contains about 32 different proteins and 1 molecule of RNA (18S) (PubMed:35613268). The 60S subunit contains 45 different proteins and 3 molecules of RNA (25S, 5.8S and 5S) (PubMed:35613268).</text>
</comment>
<comment type="subcellular location">
    <subcellularLocation>
        <location evidence="6">Cytoplasm</location>
    </subcellularLocation>
</comment>
<comment type="similarity">
    <text evidence="5">Belongs to the eukaryotic ribosomal protein eL19 family.</text>
</comment>
<gene>
    <name evidence="4" type="primary">RPL19A</name>
    <name type="synonym">RPL19B</name>
    <name type="ordered locus">orf19.5904</name>
    <name type="ORF">CAALFM_C304500CA</name>
</gene>
<sequence length="190" mass="21885">MANLRTQKRLAASVIGVGKRKVWLDPNETTEIANANSRSAIRKLYKNGTIVKKPETVHSRSRARALKESKRAGRHMGYGKRKGTKDARMPSQVLWMRRLRVLRKLLAKYRDAGKIDKHLYHNLYKAAKGNTFKHKRSLVEHIIAAKAEALREKALKEEAEARRVRNRAARERRQQRLAEKKEALFAEAAN</sequence>
<name>RL19A_CANAL</name>
<reference key="1">
    <citation type="journal article" date="2004" name="Proc. Natl. Acad. Sci. U.S.A.">
        <title>The diploid genome sequence of Candida albicans.</title>
        <authorList>
            <person name="Jones T."/>
            <person name="Federspiel N.A."/>
            <person name="Chibana H."/>
            <person name="Dungan J."/>
            <person name="Kalman S."/>
            <person name="Magee B.B."/>
            <person name="Newport G."/>
            <person name="Thorstenson Y.R."/>
            <person name="Agabian N."/>
            <person name="Magee P.T."/>
            <person name="Davis R.W."/>
            <person name="Scherer S."/>
        </authorList>
    </citation>
    <scope>NUCLEOTIDE SEQUENCE [LARGE SCALE GENOMIC DNA]</scope>
    <source>
        <strain>SC5314 / ATCC MYA-2876</strain>
    </source>
</reference>
<reference key="2">
    <citation type="journal article" date="2007" name="Genome Biol.">
        <title>Assembly of the Candida albicans genome into sixteen supercontigs aligned on the eight chromosomes.</title>
        <authorList>
            <person name="van het Hoog M."/>
            <person name="Rast T.J."/>
            <person name="Martchenko M."/>
            <person name="Grindle S."/>
            <person name="Dignard D."/>
            <person name="Hogues H."/>
            <person name="Cuomo C."/>
            <person name="Berriman M."/>
            <person name="Scherer S."/>
            <person name="Magee B.B."/>
            <person name="Whiteway M."/>
            <person name="Chibana H."/>
            <person name="Nantel A."/>
            <person name="Magee P.T."/>
        </authorList>
    </citation>
    <scope>GENOME REANNOTATION</scope>
    <source>
        <strain>SC5314 / ATCC MYA-2876</strain>
    </source>
</reference>
<reference key="3">
    <citation type="journal article" date="2013" name="Genome Biol.">
        <title>Assembly of a phased diploid Candida albicans genome facilitates allele-specific measurements and provides a simple model for repeat and indel structure.</title>
        <authorList>
            <person name="Muzzey D."/>
            <person name="Schwartz K."/>
            <person name="Weissman J.S."/>
            <person name="Sherlock G."/>
        </authorList>
    </citation>
    <scope>NUCLEOTIDE SEQUENCE [LARGE SCALE GENOMIC DNA]</scope>
    <scope>GENOME REANNOTATION</scope>
    <source>
        <strain>SC5314 / ATCC MYA-2876</strain>
    </source>
</reference>
<reference evidence="7 8 9" key="4">
    <citation type="journal article" date="2022" name="Sci. Adv.">
        <title>E-site drug specificity of the human pathogen Candida albicans ribosome.</title>
        <authorList>
            <person name="Zgadzay Y."/>
            <person name="Kolosova O."/>
            <person name="Stetsenko A."/>
            <person name="Wu C."/>
            <person name="Bruchlen D."/>
            <person name="Usachev K."/>
            <person name="Validov S."/>
            <person name="Jenner L."/>
            <person name="Rogachev A."/>
            <person name="Yusupova G."/>
            <person name="Sachs M.S."/>
            <person name="Guskov A."/>
            <person name="Yusupov M."/>
        </authorList>
    </citation>
    <scope>STRUCTURE BY ELECTRON MICROSCOPY (2.32 ANGSTROMS) OF THE 80S RIBOSOME</scope>
    <scope>SUBUNIT</scope>
</reference>
<dbReference type="EMBL" id="CP017625">
    <property type="protein sequence ID" value="AOW28468.1"/>
    <property type="molecule type" value="Genomic_DNA"/>
</dbReference>
<dbReference type="RefSeq" id="XP_019330865.1">
    <property type="nucleotide sequence ID" value="XM_019475320.1"/>
</dbReference>
<dbReference type="PDB" id="7PZY">
    <property type="method" value="EM"/>
    <property type="resolution" value="2.32 A"/>
    <property type="chains" value="z=1-190"/>
</dbReference>
<dbReference type="PDB" id="7Q08">
    <property type="method" value="EM"/>
    <property type="resolution" value="2.56 A"/>
    <property type="chains" value="z=1-190"/>
</dbReference>
<dbReference type="PDB" id="7Q0F">
    <property type="method" value="EM"/>
    <property type="resolution" value="2.64 A"/>
    <property type="chains" value="z=1-190"/>
</dbReference>
<dbReference type="PDB" id="7Q0P">
    <property type="method" value="EM"/>
    <property type="resolution" value="2.77 A"/>
    <property type="chains" value="z=1-190"/>
</dbReference>
<dbReference type="PDB" id="7Q0R">
    <property type="method" value="EM"/>
    <property type="resolution" value="2.67 A"/>
    <property type="chains" value="z=1-190"/>
</dbReference>
<dbReference type="PDB" id="8C3A">
    <property type="method" value="X-ray"/>
    <property type="resolution" value="3.00 A"/>
    <property type="chains" value="BM/z=1-190"/>
</dbReference>
<dbReference type="PDB" id="8CQ7">
    <property type="method" value="X-ray"/>
    <property type="resolution" value="3.20 A"/>
    <property type="chains" value="BM/z=1-190"/>
</dbReference>
<dbReference type="PDB" id="8CQW">
    <property type="method" value="X-ray"/>
    <property type="resolution" value="3.05 A"/>
    <property type="chains" value="BM/z=1-190"/>
</dbReference>
<dbReference type="PDB" id="8CRE">
    <property type="method" value="X-ray"/>
    <property type="resolution" value="3.00 A"/>
    <property type="chains" value="BM/z=1-190"/>
</dbReference>
<dbReference type="PDB" id="8OEQ">
    <property type="method" value="X-ray"/>
    <property type="resolution" value="3.30 A"/>
    <property type="chains" value="BM/z=1-190"/>
</dbReference>
<dbReference type="PDB" id="8OGJ">
    <property type="method" value="EM"/>
    <property type="resolution" value="3.10 A"/>
    <property type="chains" value="z=1-190"/>
</dbReference>
<dbReference type="PDB" id="8OH6">
    <property type="method" value="X-ray"/>
    <property type="resolution" value="3.35 A"/>
    <property type="chains" value="BM/z=1-190"/>
</dbReference>
<dbReference type="PDB" id="8OI5">
    <property type="method" value="X-ray"/>
    <property type="resolution" value="2.90 A"/>
    <property type="chains" value="BM/z=1-190"/>
</dbReference>
<dbReference type="PDB" id="8OJ3">
    <property type="method" value="X-ray"/>
    <property type="resolution" value="3.50 A"/>
    <property type="chains" value="BM/z=1-190"/>
</dbReference>
<dbReference type="PDB" id="8Q5I">
    <property type="method" value="EM"/>
    <property type="resolution" value="2.45 A"/>
    <property type="chains" value="z=1-190"/>
</dbReference>
<dbReference type="PDBsum" id="7PZY"/>
<dbReference type="PDBsum" id="7Q08"/>
<dbReference type="PDBsum" id="7Q0F"/>
<dbReference type="PDBsum" id="7Q0P"/>
<dbReference type="PDBsum" id="7Q0R"/>
<dbReference type="PDBsum" id="8C3A"/>
<dbReference type="PDBsum" id="8CQ7"/>
<dbReference type="PDBsum" id="8CQW"/>
<dbReference type="PDBsum" id="8CRE"/>
<dbReference type="PDBsum" id="8OEQ"/>
<dbReference type="PDBsum" id="8OGJ"/>
<dbReference type="PDBsum" id="8OH6"/>
<dbReference type="PDBsum" id="8OI5"/>
<dbReference type="PDBsum" id="8OJ3"/>
<dbReference type="PDBsum" id="8Q5I"/>
<dbReference type="EMDB" id="EMD-13737"/>
<dbReference type="EMDB" id="EMD-13741"/>
<dbReference type="EMDB" id="EMD-13744"/>
<dbReference type="EMDB" id="EMD-13749"/>
<dbReference type="EMDB" id="EMD-13750"/>
<dbReference type="EMDB" id="EMD-16874"/>
<dbReference type="SMR" id="A0A1D8PK40"/>
<dbReference type="FunCoup" id="A0A1D8PK40">
    <property type="interactions" value="1060"/>
</dbReference>
<dbReference type="STRING" id="237561.A0A1D8PK40"/>
<dbReference type="EnsemblFungi" id="C3_04500C_A-T">
    <property type="protein sequence ID" value="C3_04500C_A-T-p1"/>
    <property type="gene ID" value="C3_04500C_A"/>
</dbReference>
<dbReference type="GeneID" id="3635257"/>
<dbReference type="KEGG" id="cal:CAALFM_C304500CA"/>
<dbReference type="CGD" id="CAL0000180894">
    <property type="gene designation" value="RPL19A"/>
</dbReference>
<dbReference type="VEuPathDB" id="FungiDB:C3_04500C_A"/>
<dbReference type="eggNOG" id="KOG1696">
    <property type="taxonomic scope" value="Eukaryota"/>
</dbReference>
<dbReference type="InParanoid" id="A0A1D8PK40"/>
<dbReference type="OMA" id="NRVWIDP"/>
<dbReference type="OrthoDB" id="5407653at2759"/>
<dbReference type="Proteomes" id="UP000000559">
    <property type="component" value="Chromosome 3"/>
</dbReference>
<dbReference type="GO" id="GO:0009986">
    <property type="term" value="C:cell surface"/>
    <property type="evidence" value="ECO:0000314"/>
    <property type="project" value="CGD"/>
</dbReference>
<dbReference type="GO" id="GO:0022625">
    <property type="term" value="C:cytosolic large ribosomal subunit"/>
    <property type="evidence" value="ECO:0000318"/>
    <property type="project" value="GO_Central"/>
</dbReference>
<dbReference type="GO" id="GO:0003723">
    <property type="term" value="F:RNA binding"/>
    <property type="evidence" value="ECO:0000318"/>
    <property type="project" value="GO_Central"/>
</dbReference>
<dbReference type="GO" id="GO:0003735">
    <property type="term" value="F:structural constituent of ribosome"/>
    <property type="evidence" value="ECO:0000318"/>
    <property type="project" value="GO_Central"/>
</dbReference>
<dbReference type="GO" id="GO:0006412">
    <property type="term" value="P:translation"/>
    <property type="evidence" value="ECO:0007669"/>
    <property type="project" value="InterPro"/>
</dbReference>
<dbReference type="CDD" id="cd01417">
    <property type="entry name" value="Ribosomal_L19e_E"/>
    <property type="match status" value="1"/>
</dbReference>
<dbReference type="FunFam" id="1.10.1200.240:FF:000001">
    <property type="entry name" value="Ribosomal protein L19"/>
    <property type="match status" value="1"/>
</dbReference>
<dbReference type="FunFam" id="1.10.1650.10:FF:000001">
    <property type="entry name" value="Ribosomal protein L19"/>
    <property type="match status" value="1"/>
</dbReference>
<dbReference type="Gene3D" id="1.10.1200.240">
    <property type="match status" value="1"/>
</dbReference>
<dbReference type="Gene3D" id="1.10.1650.10">
    <property type="match status" value="1"/>
</dbReference>
<dbReference type="HAMAP" id="MF_01475">
    <property type="entry name" value="Ribosomal_eL19"/>
    <property type="match status" value="1"/>
</dbReference>
<dbReference type="InterPro" id="IPR035970">
    <property type="entry name" value="60S_ribosomal_eL19_sf"/>
</dbReference>
<dbReference type="InterPro" id="IPR039547">
    <property type="entry name" value="Ribosomal_eL19"/>
</dbReference>
<dbReference type="InterPro" id="IPR023638">
    <property type="entry name" value="Ribosomal_eL19_CS"/>
</dbReference>
<dbReference type="InterPro" id="IPR000196">
    <property type="entry name" value="Ribosomal_eL19_dom"/>
</dbReference>
<dbReference type="InterPro" id="IPR015972">
    <property type="entry name" value="Ribosomal_eL19_dom1"/>
</dbReference>
<dbReference type="InterPro" id="IPR033935">
    <property type="entry name" value="Ribosomal_eL19_euk"/>
</dbReference>
<dbReference type="NCBIfam" id="NF006343">
    <property type="entry name" value="PRK08570.1"/>
    <property type="match status" value="1"/>
</dbReference>
<dbReference type="PANTHER" id="PTHR10722">
    <property type="entry name" value="60S RIBOSOMAL PROTEIN L19"/>
    <property type="match status" value="1"/>
</dbReference>
<dbReference type="Pfam" id="PF01280">
    <property type="entry name" value="Ribosomal_L19e"/>
    <property type="match status" value="1"/>
</dbReference>
<dbReference type="Pfam" id="PF25476">
    <property type="entry name" value="Ribosomal_L19e_C"/>
    <property type="match status" value="1"/>
</dbReference>
<dbReference type="SMART" id="SM01416">
    <property type="entry name" value="Ribosomal_L19e"/>
    <property type="match status" value="1"/>
</dbReference>
<dbReference type="SUPFAM" id="SSF48140">
    <property type="entry name" value="Ribosomal protein L19 (L19e)"/>
    <property type="match status" value="1"/>
</dbReference>
<dbReference type="PROSITE" id="PS00526">
    <property type="entry name" value="RIBOSOMAL_L19E"/>
    <property type="match status" value="1"/>
</dbReference>
<proteinExistence type="evidence at protein level"/>
<accession>A0A1D8PK40</accession>